<reference key="1">
    <citation type="journal article" date="2011" name="MBio">
        <title>Novel metabolic attributes of the genus Cyanothece, comprising a group of unicellular nitrogen-fixing Cyanobacteria.</title>
        <authorList>
            <person name="Bandyopadhyay A."/>
            <person name="Elvitigala T."/>
            <person name="Welsh E."/>
            <person name="Stockel J."/>
            <person name="Liberton M."/>
            <person name="Min H."/>
            <person name="Sherman L.A."/>
            <person name="Pakrasi H.B."/>
        </authorList>
    </citation>
    <scope>NUCLEOTIDE SEQUENCE [LARGE SCALE GENOMIC DNA]</scope>
    <source>
        <strain>PCC 8801 / RF-1</strain>
    </source>
</reference>
<feature type="chain" id="PRO_1000143973" description="Large ribosomal subunit protein uL6">
    <location>
        <begin position="1"/>
        <end position="179"/>
    </location>
</feature>
<name>RL6_RIPO1</name>
<evidence type="ECO:0000255" key="1">
    <source>
        <dbReference type="HAMAP-Rule" id="MF_01365"/>
    </source>
</evidence>
<evidence type="ECO:0000305" key="2"/>
<accession>B7K234</accession>
<gene>
    <name evidence="1" type="primary">rplF</name>
    <name evidence="1" type="synonym">rpl6</name>
    <name type="ordered locus">PCC8801_0238</name>
</gene>
<keyword id="KW-1185">Reference proteome</keyword>
<keyword id="KW-0687">Ribonucleoprotein</keyword>
<keyword id="KW-0689">Ribosomal protein</keyword>
<keyword id="KW-0694">RNA-binding</keyword>
<keyword id="KW-0699">rRNA-binding</keyword>
<proteinExistence type="inferred from homology"/>
<comment type="function">
    <text evidence="1">This protein binds to the 23S rRNA, and is important in its secondary structure. It is located near the subunit interface in the base of the L7/L12 stalk, and near the tRNA binding site of the peptidyltransferase center.</text>
</comment>
<comment type="subunit">
    <text evidence="1">Part of the 50S ribosomal subunit.</text>
</comment>
<comment type="similarity">
    <text evidence="1">Belongs to the universal ribosomal protein uL6 family.</text>
</comment>
<protein>
    <recommendedName>
        <fullName evidence="1">Large ribosomal subunit protein uL6</fullName>
    </recommendedName>
    <alternativeName>
        <fullName evidence="2">50S ribosomal protein L6</fullName>
    </alternativeName>
</protein>
<sequence>MSRIGKRPIPIPNKVTIDIQGQHVAVKGPKGSLERTLPDKVNVVQENDTLLVQREDDSRTARERHGLTRTLVANMVEGVSKGFEKRLSIQGVGYRAQVQGTKLTLNVGYSKPVEMTMPAGIQVAVENNTLVIVSGIDKEIVGNVSAEIRAVRPPEVYKGKGIRYSDEFVRRKAGKTGKK</sequence>
<dbReference type="EMBL" id="CP001287">
    <property type="protein sequence ID" value="ACK64341.1"/>
    <property type="molecule type" value="Genomic_DNA"/>
</dbReference>
<dbReference type="RefSeq" id="WP_012593618.1">
    <property type="nucleotide sequence ID" value="NC_011726.1"/>
</dbReference>
<dbReference type="SMR" id="B7K234"/>
<dbReference type="STRING" id="41431.PCC8801_0238"/>
<dbReference type="KEGG" id="cyp:PCC8801_0238"/>
<dbReference type="eggNOG" id="COG0097">
    <property type="taxonomic scope" value="Bacteria"/>
</dbReference>
<dbReference type="HOGENOM" id="CLU_065464_1_2_3"/>
<dbReference type="OrthoDB" id="9805007at2"/>
<dbReference type="Proteomes" id="UP000008204">
    <property type="component" value="Chromosome"/>
</dbReference>
<dbReference type="GO" id="GO:0022625">
    <property type="term" value="C:cytosolic large ribosomal subunit"/>
    <property type="evidence" value="ECO:0007669"/>
    <property type="project" value="TreeGrafter"/>
</dbReference>
<dbReference type="GO" id="GO:0019843">
    <property type="term" value="F:rRNA binding"/>
    <property type="evidence" value="ECO:0007669"/>
    <property type="project" value="UniProtKB-UniRule"/>
</dbReference>
<dbReference type="GO" id="GO:0003735">
    <property type="term" value="F:structural constituent of ribosome"/>
    <property type="evidence" value="ECO:0007669"/>
    <property type="project" value="InterPro"/>
</dbReference>
<dbReference type="GO" id="GO:0002181">
    <property type="term" value="P:cytoplasmic translation"/>
    <property type="evidence" value="ECO:0007669"/>
    <property type="project" value="TreeGrafter"/>
</dbReference>
<dbReference type="FunFam" id="3.90.930.12:FF:000001">
    <property type="entry name" value="50S ribosomal protein L6"/>
    <property type="match status" value="1"/>
</dbReference>
<dbReference type="FunFam" id="3.90.930.12:FF:000002">
    <property type="entry name" value="50S ribosomal protein L6"/>
    <property type="match status" value="1"/>
</dbReference>
<dbReference type="Gene3D" id="3.90.930.12">
    <property type="entry name" value="Ribosomal protein L6, alpha-beta domain"/>
    <property type="match status" value="2"/>
</dbReference>
<dbReference type="HAMAP" id="MF_01365_B">
    <property type="entry name" value="Ribosomal_uL6_B"/>
    <property type="match status" value="1"/>
</dbReference>
<dbReference type="InterPro" id="IPR000702">
    <property type="entry name" value="Ribosomal_uL6-like"/>
</dbReference>
<dbReference type="InterPro" id="IPR036789">
    <property type="entry name" value="Ribosomal_uL6-like_a/b-dom_sf"/>
</dbReference>
<dbReference type="InterPro" id="IPR020040">
    <property type="entry name" value="Ribosomal_uL6_a/b-dom"/>
</dbReference>
<dbReference type="InterPro" id="IPR019906">
    <property type="entry name" value="Ribosomal_uL6_bac-type"/>
</dbReference>
<dbReference type="InterPro" id="IPR002358">
    <property type="entry name" value="Ribosomal_uL6_CS"/>
</dbReference>
<dbReference type="NCBIfam" id="TIGR03654">
    <property type="entry name" value="L6_bact"/>
    <property type="match status" value="1"/>
</dbReference>
<dbReference type="PANTHER" id="PTHR11655">
    <property type="entry name" value="60S/50S RIBOSOMAL PROTEIN L6/L9"/>
    <property type="match status" value="1"/>
</dbReference>
<dbReference type="PANTHER" id="PTHR11655:SF14">
    <property type="entry name" value="LARGE RIBOSOMAL SUBUNIT PROTEIN UL6M"/>
    <property type="match status" value="1"/>
</dbReference>
<dbReference type="Pfam" id="PF00347">
    <property type="entry name" value="Ribosomal_L6"/>
    <property type="match status" value="2"/>
</dbReference>
<dbReference type="PIRSF" id="PIRSF002162">
    <property type="entry name" value="Ribosomal_L6"/>
    <property type="match status" value="1"/>
</dbReference>
<dbReference type="PRINTS" id="PR00059">
    <property type="entry name" value="RIBOSOMALL6"/>
</dbReference>
<dbReference type="SUPFAM" id="SSF56053">
    <property type="entry name" value="Ribosomal protein L6"/>
    <property type="match status" value="2"/>
</dbReference>
<dbReference type="PROSITE" id="PS00525">
    <property type="entry name" value="RIBOSOMAL_L6_1"/>
    <property type="match status" value="1"/>
</dbReference>
<organism>
    <name type="scientific">Rippkaea orientalis (strain PCC 8801 / RF-1)</name>
    <name type="common">Cyanothece sp. (strain PCC 8801)</name>
    <dbReference type="NCBI Taxonomy" id="41431"/>
    <lineage>
        <taxon>Bacteria</taxon>
        <taxon>Bacillati</taxon>
        <taxon>Cyanobacteriota</taxon>
        <taxon>Cyanophyceae</taxon>
        <taxon>Oscillatoriophycideae</taxon>
        <taxon>Chroococcales</taxon>
        <taxon>Aphanothecaceae</taxon>
        <taxon>Rippkaea</taxon>
        <taxon>Rippkaea orientalis</taxon>
    </lineage>
</organism>